<comment type="function">
    <text evidence="2">May play a role in vesicular transport from endoplasmic reticulum to Golgi.</text>
</comment>
<comment type="subunit">
    <text evidence="2">Part of the multisubunit TRAPP (transport protein particle) complex.</text>
</comment>
<comment type="subcellular location">
    <subcellularLocation>
        <location evidence="1">Golgi apparatus membrane</location>
    </subcellularLocation>
    <subcellularLocation>
        <location evidence="1">Endoplasmic reticulum</location>
    </subcellularLocation>
</comment>
<comment type="similarity">
    <text evidence="3">Belongs to the TRAPP small subunits family. TRAPPC4 subfamily.</text>
</comment>
<accession>Q54UU1</accession>
<dbReference type="EMBL" id="AAFI02000025">
    <property type="protein sequence ID" value="EAL67025.1"/>
    <property type="molecule type" value="Genomic_DNA"/>
</dbReference>
<dbReference type="RefSeq" id="XP_641000.1">
    <property type="nucleotide sequence ID" value="XM_635908.1"/>
</dbReference>
<dbReference type="SMR" id="Q54UU1"/>
<dbReference type="FunCoup" id="Q54UU1">
    <property type="interactions" value="1"/>
</dbReference>
<dbReference type="STRING" id="44689.Q54UU1"/>
<dbReference type="PaxDb" id="44689-DDB0252669"/>
<dbReference type="EnsemblProtists" id="EAL67025">
    <property type="protein sequence ID" value="EAL67025"/>
    <property type="gene ID" value="DDB_G0280827"/>
</dbReference>
<dbReference type="GeneID" id="8621803"/>
<dbReference type="KEGG" id="ddi:DDB_G0280827"/>
<dbReference type="dictyBase" id="DDB_G0280827">
    <property type="gene designation" value="trappc4"/>
</dbReference>
<dbReference type="VEuPathDB" id="AmoebaDB:DDB_G0280827"/>
<dbReference type="eggNOG" id="KOG3369">
    <property type="taxonomic scope" value="Eukaryota"/>
</dbReference>
<dbReference type="HOGENOM" id="CLU_053380_2_2_1"/>
<dbReference type="InParanoid" id="Q54UU1"/>
<dbReference type="OMA" id="MPIRTEG"/>
<dbReference type="PhylomeDB" id="Q54UU1"/>
<dbReference type="Reactome" id="R-DDI-204005">
    <property type="pathway name" value="COPII-mediated vesicle transport"/>
</dbReference>
<dbReference type="Reactome" id="R-DDI-8876198">
    <property type="pathway name" value="RAB GEFs exchange GTP for GDP on RABs"/>
</dbReference>
<dbReference type="PRO" id="PR:Q54UU1"/>
<dbReference type="Proteomes" id="UP000002195">
    <property type="component" value="Chromosome 3"/>
</dbReference>
<dbReference type="GO" id="GO:0005783">
    <property type="term" value="C:endoplasmic reticulum"/>
    <property type="evidence" value="ECO:0007669"/>
    <property type="project" value="UniProtKB-SubCell"/>
</dbReference>
<dbReference type="GO" id="GO:0000139">
    <property type="term" value="C:Golgi membrane"/>
    <property type="evidence" value="ECO:0007669"/>
    <property type="project" value="UniProtKB-SubCell"/>
</dbReference>
<dbReference type="GO" id="GO:0030008">
    <property type="term" value="C:TRAPP complex"/>
    <property type="evidence" value="ECO:0000318"/>
    <property type="project" value="GO_Central"/>
</dbReference>
<dbReference type="GO" id="GO:0006888">
    <property type="term" value="P:endoplasmic reticulum to Golgi vesicle-mediated transport"/>
    <property type="evidence" value="ECO:0000318"/>
    <property type="project" value="GO_Central"/>
</dbReference>
<dbReference type="CDD" id="cd14856">
    <property type="entry name" value="TRAPPC4_synbindin"/>
    <property type="match status" value="1"/>
</dbReference>
<dbReference type="FunFam" id="3.30.450.70:FF:000007">
    <property type="entry name" value="Putative sybindin-like family protein"/>
    <property type="match status" value="1"/>
</dbReference>
<dbReference type="Gene3D" id="3.30.450.70">
    <property type="match status" value="1"/>
</dbReference>
<dbReference type="InterPro" id="IPR011012">
    <property type="entry name" value="Longin-like_dom_sf"/>
</dbReference>
<dbReference type="InterPro" id="IPR007233">
    <property type="entry name" value="TRAPPC"/>
</dbReference>
<dbReference type="PANTHER" id="PTHR23249">
    <property type="entry name" value="TRAFFICKING PROTEIN PARTICLE COMPLEX SUBUNIT"/>
    <property type="match status" value="1"/>
</dbReference>
<dbReference type="PANTHER" id="PTHR23249:SF15">
    <property type="entry name" value="TRAFFICKING PROTEIN PARTICLE COMPLEX SUBUNIT 4"/>
    <property type="match status" value="1"/>
</dbReference>
<dbReference type="Pfam" id="PF04099">
    <property type="entry name" value="Sybindin"/>
    <property type="match status" value="1"/>
</dbReference>
<dbReference type="SMART" id="SM01399">
    <property type="entry name" value="Sybindin"/>
    <property type="match status" value="1"/>
</dbReference>
<dbReference type="SUPFAM" id="SSF64356">
    <property type="entry name" value="SNARE-like"/>
    <property type="match status" value="1"/>
</dbReference>
<organism>
    <name type="scientific">Dictyostelium discoideum</name>
    <name type="common">Social amoeba</name>
    <dbReference type="NCBI Taxonomy" id="44689"/>
    <lineage>
        <taxon>Eukaryota</taxon>
        <taxon>Amoebozoa</taxon>
        <taxon>Evosea</taxon>
        <taxon>Eumycetozoa</taxon>
        <taxon>Dictyostelia</taxon>
        <taxon>Dictyosteliales</taxon>
        <taxon>Dictyosteliaceae</taxon>
        <taxon>Dictyostelium</taxon>
    </lineage>
</organism>
<sequence>MTINSIYILNKAGTLIYQNDFGNTEKLSHNSYIRLGSTFHSLHAIASNLSPVSGSSSGIEVIETEAFKLQCFQTHTGIKFYVIADPNHQQLEELLHGVYELYTDYVLKNPFYEIEMQIRCDLFDYKLNRLLGVRE</sequence>
<protein>
    <recommendedName>
        <fullName>Trafficking protein particle complex subunit 4</fullName>
    </recommendedName>
</protein>
<feature type="chain" id="PRO_0000330745" description="Trafficking protein particle complex subunit 4">
    <location>
        <begin position="1"/>
        <end position="135"/>
    </location>
</feature>
<gene>
    <name type="primary">trappc4</name>
    <name type="ORF">DDB_G0280827</name>
</gene>
<name>TPPC4_DICDI</name>
<keyword id="KW-0256">Endoplasmic reticulum</keyword>
<keyword id="KW-0931">ER-Golgi transport</keyword>
<keyword id="KW-0333">Golgi apparatus</keyword>
<keyword id="KW-0472">Membrane</keyword>
<keyword id="KW-1185">Reference proteome</keyword>
<keyword id="KW-0813">Transport</keyword>
<proteinExistence type="inferred from homology"/>
<reference key="1">
    <citation type="journal article" date="2005" name="Nature">
        <title>The genome of the social amoeba Dictyostelium discoideum.</title>
        <authorList>
            <person name="Eichinger L."/>
            <person name="Pachebat J.A."/>
            <person name="Gloeckner G."/>
            <person name="Rajandream M.A."/>
            <person name="Sucgang R."/>
            <person name="Berriman M."/>
            <person name="Song J."/>
            <person name="Olsen R."/>
            <person name="Szafranski K."/>
            <person name="Xu Q."/>
            <person name="Tunggal B."/>
            <person name="Kummerfeld S."/>
            <person name="Madera M."/>
            <person name="Konfortov B.A."/>
            <person name="Rivero F."/>
            <person name="Bankier A.T."/>
            <person name="Lehmann R."/>
            <person name="Hamlin N."/>
            <person name="Davies R."/>
            <person name="Gaudet P."/>
            <person name="Fey P."/>
            <person name="Pilcher K."/>
            <person name="Chen G."/>
            <person name="Saunders D."/>
            <person name="Sodergren E.J."/>
            <person name="Davis P."/>
            <person name="Kerhornou A."/>
            <person name="Nie X."/>
            <person name="Hall N."/>
            <person name="Anjard C."/>
            <person name="Hemphill L."/>
            <person name="Bason N."/>
            <person name="Farbrother P."/>
            <person name="Desany B."/>
            <person name="Just E."/>
            <person name="Morio T."/>
            <person name="Rost R."/>
            <person name="Churcher C.M."/>
            <person name="Cooper J."/>
            <person name="Haydock S."/>
            <person name="van Driessche N."/>
            <person name="Cronin A."/>
            <person name="Goodhead I."/>
            <person name="Muzny D.M."/>
            <person name="Mourier T."/>
            <person name="Pain A."/>
            <person name="Lu M."/>
            <person name="Harper D."/>
            <person name="Lindsay R."/>
            <person name="Hauser H."/>
            <person name="James K.D."/>
            <person name="Quiles M."/>
            <person name="Madan Babu M."/>
            <person name="Saito T."/>
            <person name="Buchrieser C."/>
            <person name="Wardroper A."/>
            <person name="Felder M."/>
            <person name="Thangavelu M."/>
            <person name="Johnson D."/>
            <person name="Knights A."/>
            <person name="Loulseged H."/>
            <person name="Mungall K.L."/>
            <person name="Oliver K."/>
            <person name="Price C."/>
            <person name="Quail M.A."/>
            <person name="Urushihara H."/>
            <person name="Hernandez J."/>
            <person name="Rabbinowitsch E."/>
            <person name="Steffen D."/>
            <person name="Sanders M."/>
            <person name="Ma J."/>
            <person name="Kohara Y."/>
            <person name="Sharp S."/>
            <person name="Simmonds M.N."/>
            <person name="Spiegler S."/>
            <person name="Tivey A."/>
            <person name="Sugano S."/>
            <person name="White B."/>
            <person name="Walker D."/>
            <person name="Woodward J.R."/>
            <person name="Winckler T."/>
            <person name="Tanaka Y."/>
            <person name="Shaulsky G."/>
            <person name="Schleicher M."/>
            <person name="Weinstock G.M."/>
            <person name="Rosenthal A."/>
            <person name="Cox E.C."/>
            <person name="Chisholm R.L."/>
            <person name="Gibbs R.A."/>
            <person name="Loomis W.F."/>
            <person name="Platzer M."/>
            <person name="Kay R.R."/>
            <person name="Williams J.G."/>
            <person name="Dear P.H."/>
            <person name="Noegel A.A."/>
            <person name="Barrell B.G."/>
            <person name="Kuspa A."/>
        </authorList>
    </citation>
    <scope>NUCLEOTIDE SEQUENCE [LARGE SCALE GENOMIC DNA]</scope>
    <source>
        <strain>AX4</strain>
    </source>
</reference>
<evidence type="ECO:0000250" key="1">
    <source>
        <dbReference type="UniProtKB" id="Q9ES56"/>
    </source>
</evidence>
<evidence type="ECO:0000250" key="2">
    <source>
        <dbReference type="UniProtKB" id="Q9Y296"/>
    </source>
</evidence>
<evidence type="ECO:0000305" key="3"/>